<name>LEUD_STRGG</name>
<reference key="1">
    <citation type="journal article" date="2008" name="J. Bacteriol.">
        <title>Genome sequence of the streptomycin-producing microorganism Streptomyces griseus IFO 13350.</title>
        <authorList>
            <person name="Ohnishi Y."/>
            <person name="Ishikawa J."/>
            <person name="Hara H."/>
            <person name="Suzuki H."/>
            <person name="Ikenoya M."/>
            <person name="Ikeda H."/>
            <person name="Yamashita A."/>
            <person name="Hattori M."/>
            <person name="Horinouchi S."/>
        </authorList>
    </citation>
    <scope>NUCLEOTIDE SEQUENCE [LARGE SCALE GENOMIC DNA]</scope>
    <source>
        <strain>JCM 4626 / CBS 651.72 / NBRC 13350 / KCC S-0626 / ISP 5235</strain>
    </source>
</reference>
<protein>
    <recommendedName>
        <fullName evidence="1">3-isopropylmalate dehydratase small subunit</fullName>
        <ecNumber evidence="1">4.2.1.33</ecNumber>
    </recommendedName>
    <alternativeName>
        <fullName evidence="1">Alpha-IPM isomerase</fullName>
        <shortName evidence="1">IPMI</shortName>
    </alternativeName>
    <alternativeName>
        <fullName evidence="1">Isopropylmalate isomerase</fullName>
    </alternativeName>
</protein>
<proteinExistence type="inferred from homology"/>
<gene>
    <name evidence="1" type="primary">leuD</name>
    <name type="ordered locus">SGR_1928</name>
</gene>
<keyword id="KW-0028">Amino-acid biosynthesis</keyword>
<keyword id="KW-0100">Branched-chain amino acid biosynthesis</keyword>
<keyword id="KW-0432">Leucine biosynthesis</keyword>
<keyword id="KW-0456">Lyase</keyword>
<evidence type="ECO:0000255" key="1">
    <source>
        <dbReference type="HAMAP-Rule" id="MF_01031"/>
    </source>
</evidence>
<sequence>MEAFTTHTGRAVPLRRSNVDTDQIIPAHWLKKVTRDGFEDGLFEAWRKDENFVLNRPERQGASVLVAGPDFGTGSSREHAVWALQNYGFKAVISSRFADIFRGNSLKNGLLTVVLEQSVVDALWELSEADPTAEVTVDLEARQVRAEGITADFELDENARWRLLNGLDDISLTLQNEADIAAYEAARPAFKPRTIAA</sequence>
<dbReference type="EC" id="4.2.1.33" evidence="1"/>
<dbReference type="EMBL" id="AP009493">
    <property type="protein sequence ID" value="BAG18757.1"/>
    <property type="molecule type" value="Genomic_DNA"/>
</dbReference>
<dbReference type="RefSeq" id="WP_003966001.1">
    <property type="nucleotide sequence ID" value="NC_010572.1"/>
</dbReference>
<dbReference type="SMR" id="B1VZ02"/>
<dbReference type="KEGG" id="sgr:SGR_1928"/>
<dbReference type="eggNOG" id="COG0066">
    <property type="taxonomic scope" value="Bacteria"/>
</dbReference>
<dbReference type="HOGENOM" id="CLU_081378_0_1_11"/>
<dbReference type="UniPathway" id="UPA00048">
    <property type="reaction ID" value="UER00071"/>
</dbReference>
<dbReference type="Proteomes" id="UP000001685">
    <property type="component" value="Chromosome"/>
</dbReference>
<dbReference type="GO" id="GO:0009316">
    <property type="term" value="C:3-isopropylmalate dehydratase complex"/>
    <property type="evidence" value="ECO:0007669"/>
    <property type="project" value="InterPro"/>
</dbReference>
<dbReference type="GO" id="GO:0003861">
    <property type="term" value="F:3-isopropylmalate dehydratase activity"/>
    <property type="evidence" value="ECO:0007669"/>
    <property type="project" value="UniProtKB-UniRule"/>
</dbReference>
<dbReference type="GO" id="GO:0009098">
    <property type="term" value="P:L-leucine biosynthetic process"/>
    <property type="evidence" value="ECO:0007669"/>
    <property type="project" value="UniProtKB-UniRule"/>
</dbReference>
<dbReference type="CDD" id="cd01577">
    <property type="entry name" value="IPMI_Swivel"/>
    <property type="match status" value="1"/>
</dbReference>
<dbReference type="FunFam" id="3.20.19.10:FF:000003">
    <property type="entry name" value="3-isopropylmalate dehydratase small subunit"/>
    <property type="match status" value="1"/>
</dbReference>
<dbReference type="Gene3D" id="3.20.19.10">
    <property type="entry name" value="Aconitase, domain 4"/>
    <property type="match status" value="1"/>
</dbReference>
<dbReference type="HAMAP" id="MF_01031">
    <property type="entry name" value="LeuD_type1"/>
    <property type="match status" value="1"/>
</dbReference>
<dbReference type="InterPro" id="IPR004431">
    <property type="entry name" value="3-IsopropMal_deHydase_ssu"/>
</dbReference>
<dbReference type="InterPro" id="IPR015928">
    <property type="entry name" value="Aconitase/3IPM_dehydase_swvl"/>
</dbReference>
<dbReference type="InterPro" id="IPR000573">
    <property type="entry name" value="AconitaseA/IPMdHydase_ssu_swvl"/>
</dbReference>
<dbReference type="InterPro" id="IPR033940">
    <property type="entry name" value="IPMI_Swivel"/>
</dbReference>
<dbReference type="InterPro" id="IPR050075">
    <property type="entry name" value="LeuD"/>
</dbReference>
<dbReference type="NCBIfam" id="TIGR00171">
    <property type="entry name" value="leuD"/>
    <property type="match status" value="1"/>
</dbReference>
<dbReference type="NCBIfam" id="NF002458">
    <property type="entry name" value="PRK01641.1"/>
    <property type="match status" value="1"/>
</dbReference>
<dbReference type="PANTHER" id="PTHR43345:SF5">
    <property type="entry name" value="3-ISOPROPYLMALATE DEHYDRATASE SMALL SUBUNIT"/>
    <property type="match status" value="1"/>
</dbReference>
<dbReference type="PANTHER" id="PTHR43345">
    <property type="entry name" value="3-ISOPROPYLMALATE DEHYDRATASE SMALL SUBUNIT 2-RELATED-RELATED"/>
    <property type="match status" value="1"/>
</dbReference>
<dbReference type="Pfam" id="PF00694">
    <property type="entry name" value="Aconitase_C"/>
    <property type="match status" value="1"/>
</dbReference>
<dbReference type="SUPFAM" id="SSF52016">
    <property type="entry name" value="LeuD/IlvD-like"/>
    <property type="match status" value="1"/>
</dbReference>
<comment type="function">
    <text evidence="1">Catalyzes the isomerization between 2-isopropylmalate and 3-isopropylmalate, via the formation of 2-isopropylmaleate.</text>
</comment>
<comment type="catalytic activity">
    <reaction evidence="1">
        <text>(2R,3S)-3-isopropylmalate = (2S)-2-isopropylmalate</text>
        <dbReference type="Rhea" id="RHEA:32287"/>
        <dbReference type="ChEBI" id="CHEBI:1178"/>
        <dbReference type="ChEBI" id="CHEBI:35121"/>
        <dbReference type="EC" id="4.2.1.33"/>
    </reaction>
</comment>
<comment type="pathway">
    <text evidence="1">Amino-acid biosynthesis; L-leucine biosynthesis; L-leucine from 3-methyl-2-oxobutanoate: step 2/4.</text>
</comment>
<comment type="subunit">
    <text evidence="1">Heterodimer of LeuC and LeuD.</text>
</comment>
<comment type="similarity">
    <text evidence="1">Belongs to the LeuD family. LeuD type 1 subfamily.</text>
</comment>
<organism>
    <name type="scientific">Streptomyces griseus subsp. griseus (strain JCM 4626 / CBS 651.72 / NBRC 13350 / KCC S-0626 / ISP 5235)</name>
    <dbReference type="NCBI Taxonomy" id="455632"/>
    <lineage>
        <taxon>Bacteria</taxon>
        <taxon>Bacillati</taxon>
        <taxon>Actinomycetota</taxon>
        <taxon>Actinomycetes</taxon>
        <taxon>Kitasatosporales</taxon>
        <taxon>Streptomycetaceae</taxon>
        <taxon>Streptomyces</taxon>
    </lineage>
</organism>
<accession>B1VZ02</accession>
<feature type="chain" id="PRO_1000135836" description="3-isopropylmalate dehydratase small subunit">
    <location>
        <begin position="1"/>
        <end position="197"/>
    </location>
</feature>